<comment type="function">
    <text evidence="3">Odorant receptor.</text>
</comment>
<comment type="subcellular location">
    <subcellularLocation>
        <location>Cell membrane</location>
        <topology>Multi-pass membrane protein</topology>
    </subcellularLocation>
</comment>
<comment type="similarity">
    <text evidence="2">Belongs to the G-protein coupled receptor 1 family.</text>
</comment>
<comment type="caution">
    <text evidence="3">Could be the product of a pseudogene.</text>
</comment>
<comment type="online information" name="Human Olfactory Receptor Data Exploratorium (HORDE)">
    <link uri="http://genome.weizmann.ac.il/horde/card/index/symbol:OR10J6P"/>
</comment>
<sequence length="276" mass="31021">MRRKNLTEVTEFVFLGFSRFHKHHITLFVVFLILYTLTVAGNAIIMTIICIDRHLHTPMYFFLSMLASSKTVYTLFIIPQMLSSFVTQTQPISLAGCTTQTFFFVTLAINNCFLLTVMGYDHYMAICNPLRYRVITSKKVCVQLVCGAFSIGLAMAAVQVTSIFTLPFCHTVVGHFFCDILPVMKLSCINTTINEIINFVVRLFVILVPMGLVFISYVLIISTVLKIASAEGWKKTFATCAFHLTVVIVHYGCASIAYLMPKSENSIEQDLLLSVT</sequence>
<proteinExistence type="uncertain"/>
<reference key="1">
    <citation type="submission" date="2001-07" db="EMBL/GenBank/DDBJ databases">
        <title>Genome-wide discovery and analysis of human seven transmembrane helix receptor genes.</title>
        <authorList>
            <person name="Suwa M."/>
            <person name="Sato T."/>
            <person name="Okouchi I."/>
            <person name="Arita M."/>
            <person name="Futami K."/>
            <person name="Matsumoto S."/>
            <person name="Tsutsumi S."/>
            <person name="Aburatani H."/>
            <person name="Asai K."/>
            <person name="Akiyama Y."/>
        </authorList>
    </citation>
    <scope>NUCLEOTIDE SEQUENCE [GENOMIC DNA]</scope>
</reference>
<reference key="2">
    <citation type="journal article" date="2002" name="Genomics">
        <title>DEFOG: a practical scheme for deciphering families of genes.</title>
        <authorList>
            <person name="Fuchs T."/>
            <person name="Malecova B."/>
            <person name="Linhart C."/>
            <person name="Sharan R."/>
            <person name="Khen M."/>
            <person name="Herwig R."/>
            <person name="Shmulevich D."/>
            <person name="Elkon R."/>
            <person name="Steinfath M."/>
            <person name="O'Brien J.K."/>
            <person name="Radelof U."/>
            <person name="Lehrach H."/>
            <person name="Lancet D."/>
            <person name="Shamir R."/>
        </authorList>
    </citation>
    <scope>NUCLEOTIDE SEQUENCE [GENOMIC DNA] OF 68-276</scope>
</reference>
<dbReference type="EMBL" id="AB065629">
    <property type="protein sequence ID" value="BAC05855.1"/>
    <property type="molecule type" value="Genomic_DNA"/>
</dbReference>
<dbReference type="EMBL" id="AF399588">
    <property type="protein sequence ID" value="AAK95073.1"/>
    <property type="molecule type" value="Genomic_DNA"/>
</dbReference>
<dbReference type="SMR" id="Q8NGY7"/>
<dbReference type="FunCoup" id="Q8NGY7">
    <property type="interactions" value="50"/>
</dbReference>
<dbReference type="GlyCosmos" id="Q8NGY7">
    <property type="glycosylation" value="2 sites, No reported glycans"/>
</dbReference>
<dbReference type="GlyGen" id="Q8NGY7">
    <property type="glycosylation" value="2 sites"/>
</dbReference>
<dbReference type="BioMuta" id="HGNC:14994"/>
<dbReference type="DMDM" id="38372790"/>
<dbReference type="MassIVE" id="Q8NGY7"/>
<dbReference type="AGR" id="HGNC:14994"/>
<dbReference type="GeneCards" id="OR10J6P"/>
<dbReference type="HGNC" id="HGNC:14994">
    <property type="gene designation" value="OR10J6P"/>
</dbReference>
<dbReference type="neXtProt" id="NX_Q8NGY7"/>
<dbReference type="InParanoid" id="Q8NGY7"/>
<dbReference type="PAN-GO" id="Q8NGY7">
    <property type="GO annotations" value="6 GO annotations based on evolutionary models"/>
</dbReference>
<dbReference type="PhylomeDB" id="Q8NGY7"/>
<dbReference type="PathwayCommons" id="Q8NGY7"/>
<dbReference type="Pharos" id="Q8NGY7">
    <property type="development level" value="Tdark"/>
</dbReference>
<dbReference type="Proteomes" id="UP000005640">
    <property type="component" value="Unplaced"/>
</dbReference>
<dbReference type="RNAct" id="Q8NGY7">
    <property type="molecule type" value="protein"/>
</dbReference>
<dbReference type="GO" id="GO:0005886">
    <property type="term" value="C:plasma membrane"/>
    <property type="evidence" value="ECO:0000318"/>
    <property type="project" value="GO_Central"/>
</dbReference>
<dbReference type="GO" id="GO:0004930">
    <property type="term" value="F:G protein-coupled receptor activity"/>
    <property type="evidence" value="ECO:0007669"/>
    <property type="project" value="UniProtKB-KW"/>
</dbReference>
<dbReference type="GO" id="GO:0004984">
    <property type="term" value="F:olfactory receptor activity"/>
    <property type="evidence" value="ECO:0000318"/>
    <property type="project" value="GO_Central"/>
</dbReference>
<dbReference type="GO" id="GO:0050911">
    <property type="term" value="P:detection of chemical stimulus involved in sensory perception of smell"/>
    <property type="evidence" value="ECO:0000318"/>
    <property type="project" value="GO_Central"/>
</dbReference>
<dbReference type="FunFam" id="1.20.1070.10:FF:000015">
    <property type="entry name" value="Olfactory receptor"/>
    <property type="match status" value="1"/>
</dbReference>
<dbReference type="Gene3D" id="1.20.1070.10">
    <property type="entry name" value="Rhodopsin 7-helix transmembrane proteins"/>
    <property type="match status" value="1"/>
</dbReference>
<dbReference type="InterPro" id="IPR000276">
    <property type="entry name" value="GPCR_Rhodpsn"/>
</dbReference>
<dbReference type="InterPro" id="IPR017452">
    <property type="entry name" value="GPCR_Rhodpsn_7TM"/>
</dbReference>
<dbReference type="InterPro" id="IPR000725">
    <property type="entry name" value="Olfact_rcpt"/>
</dbReference>
<dbReference type="PANTHER" id="PTHR26453">
    <property type="entry name" value="OLFACTORY RECEPTOR"/>
    <property type="match status" value="1"/>
</dbReference>
<dbReference type="Pfam" id="PF13853">
    <property type="entry name" value="7tm_4"/>
    <property type="match status" value="1"/>
</dbReference>
<dbReference type="PRINTS" id="PR00237">
    <property type="entry name" value="GPCRRHODOPSN"/>
</dbReference>
<dbReference type="PRINTS" id="PR00245">
    <property type="entry name" value="OLFACTORYR"/>
</dbReference>
<dbReference type="SUPFAM" id="SSF81321">
    <property type="entry name" value="Family A G protein-coupled receptor-like"/>
    <property type="match status" value="1"/>
</dbReference>
<dbReference type="PROSITE" id="PS50262">
    <property type="entry name" value="G_PROTEIN_RECEP_F1_2"/>
    <property type="match status" value="1"/>
</dbReference>
<feature type="chain" id="PRO_0000150710" description="Putative olfactory receptor 10J6">
    <location>
        <begin position="1"/>
        <end position="276"/>
    </location>
</feature>
<feature type="topological domain" description="Extracellular" evidence="1">
    <location>
        <begin position="1"/>
        <end position="25"/>
    </location>
</feature>
<feature type="transmembrane region" description="Helical; Name=1" evidence="1">
    <location>
        <begin position="26"/>
        <end position="46"/>
    </location>
</feature>
<feature type="topological domain" description="Cytoplasmic" evidence="1">
    <location>
        <begin position="47"/>
        <end position="54"/>
    </location>
</feature>
<feature type="transmembrane region" description="Helical; Name=2" evidence="1">
    <location>
        <begin position="55"/>
        <end position="75"/>
    </location>
</feature>
<feature type="topological domain" description="Extracellular" evidence="1">
    <location>
        <begin position="76"/>
        <end position="99"/>
    </location>
</feature>
<feature type="transmembrane region" description="Helical; Name=3" evidence="1">
    <location>
        <begin position="100"/>
        <end position="120"/>
    </location>
</feature>
<feature type="topological domain" description="Cytoplasmic" evidence="1">
    <location>
        <begin position="121"/>
        <end position="139"/>
    </location>
</feature>
<feature type="transmembrane region" description="Helical; Name=4" evidence="1">
    <location>
        <begin position="140"/>
        <end position="160"/>
    </location>
</feature>
<feature type="topological domain" description="Extracellular" evidence="1">
    <location>
        <begin position="161"/>
        <end position="196"/>
    </location>
</feature>
<feature type="transmembrane region" description="Helical; Name=5" evidence="1">
    <location>
        <begin position="197"/>
        <end position="216"/>
    </location>
</feature>
<feature type="topological domain" description="Cytoplasmic" evidence="1">
    <location>
        <begin position="217"/>
        <end position="236"/>
    </location>
</feature>
<feature type="transmembrane region" description="Helical; Name=6" evidence="1">
    <location>
        <begin position="237"/>
        <end position="257"/>
    </location>
</feature>
<feature type="topological domain" description="Extracellular" evidence="1">
    <location>
        <begin position="258"/>
        <end position="270"/>
    </location>
</feature>
<feature type="transmembrane region" description="Helical; Name=7" evidence="1">
    <location>
        <begin position="271"/>
        <end position="276"/>
    </location>
</feature>
<feature type="glycosylation site" description="N-linked (GlcNAc...) asparagine" evidence="1">
    <location>
        <position position="5"/>
    </location>
</feature>
<feature type="glycosylation site" description="N-linked (GlcNAc...) asparagine" evidence="1">
    <location>
        <position position="190"/>
    </location>
</feature>
<feature type="disulfide bond" evidence="2">
    <location>
        <begin position="97"/>
        <end position="188"/>
    </location>
</feature>
<protein>
    <recommendedName>
        <fullName>Putative olfactory receptor 10J6</fullName>
    </recommendedName>
</protein>
<keyword id="KW-1003">Cell membrane</keyword>
<keyword id="KW-1015">Disulfide bond</keyword>
<keyword id="KW-0297">G-protein coupled receptor</keyword>
<keyword id="KW-0325">Glycoprotein</keyword>
<keyword id="KW-0472">Membrane</keyword>
<keyword id="KW-0552">Olfaction</keyword>
<keyword id="KW-0675">Receptor</keyword>
<keyword id="KW-1185">Reference proteome</keyword>
<keyword id="KW-0716">Sensory transduction</keyword>
<keyword id="KW-0807">Transducer</keyword>
<keyword id="KW-0812">Transmembrane</keyword>
<keyword id="KW-1133">Transmembrane helix</keyword>
<accession>Q8NGY7</accession>
<accession>Q96R55</accession>
<gene>
    <name type="primary">OR10J6P</name>
    <name type="synonym">OR10J6</name>
</gene>
<organism>
    <name type="scientific">Homo sapiens</name>
    <name type="common">Human</name>
    <dbReference type="NCBI Taxonomy" id="9606"/>
    <lineage>
        <taxon>Eukaryota</taxon>
        <taxon>Metazoa</taxon>
        <taxon>Chordata</taxon>
        <taxon>Craniata</taxon>
        <taxon>Vertebrata</taxon>
        <taxon>Euteleostomi</taxon>
        <taxon>Mammalia</taxon>
        <taxon>Eutheria</taxon>
        <taxon>Euarchontoglires</taxon>
        <taxon>Primates</taxon>
        <taxon>Haplorrhini</taxon>
        <taxon>Catarrhini</taxon>
        <taxon>Hominidae</taxon>
        <taxon>Homo</taxon>
    </lineage>
</organism>
<evidence type="ECO:0000255" key="1"/>
<evidence type="ECO:0000255" key="2">
    <source>
        <dbReference type="PROSITE-ProRule" id="PRU00521"/>
    </source>
</evidence>
<evidence type="ECO:0000305" key="3"/>
<name>O10J6_HUMAN</name>